<accession>A0A515MEN7</accession>
<proteinExistence type="evidence at protein level"/>
<organism>
    <name type="scientific">Actinia fragacea</name>
    <name type="common">Strawberry anemone</name>
    <dbReference type="NCBI Taxonomy" id="396334"/>
    <lineage>
        <taxon>Eukaryota</taxon>
        <taxon>Metazoa</taxon>
        <taxon>Cnidaria</taxon>
        <taxon>Anthozoa</taxon>
        <taxon>Hexacorallia</taxon>
        <taxon>Actiniaria</taxon>
        <taxon>Actiniidae</taxon>
        <taxon>Actinia</taxon>
    </lineage>
</organism>
<comment type="function">
    <text evidence="1 5">Pore-forming toxin (PFT) that consists of a crown-shaped octamer or nonamer that forms cation-selective hydrophilic pores of about 1.5 nm (inside) and 13 nm (outside) and causes cytolysis (By similarity). It causes cardiac stimulation (By similarity). Also causes hemolysis (HC(50)=0.3 nM) (PubMed:31295915). Interestingly, the Phe-16 is crucial for hemolysis (By similarity). Pore formation is a multi-step process that involves specific recognition of membrane sphingomyelin (but neither cholesterol nor phosphatidylcholine) using aromatic rich region and adjacent phosphocholine (POC) binding site, firm binding to the membrane (mainly driven by hydrophobic interactions) accompanied by the transfer of the N-terminal region to the lipid-water interface and finally pore formation after oligomerization of monomers (By similarity). It is probable that a dimeric form is an assembly intermediate before the complete oligomerization (By similarity). The formation of stable pores occurs only in vesicles composed of DOPC/SM (there is no oligomerization when the PFT is treated with vesicles of DOPC or SM alone) (By similarity). The transmembrane pore displays 8 lateral perforations, one at each subunit-subunit interface, partially occupied by the acyl-chain region of a bridging lipid (By similarity). Each pore contains 24 lipid molecules, firmly bound to each subunit, that is, 3 lipids (L1, L2, L3, L4 and/or L5) are associated to each subunit (By similarity). Lipid L1 bridges 2 subunits, whereas lipids L2 and L3 bind to sites at single subunit (By similarity).</text>
</comment>
<comment type="biophysicochemical properties">
    <temperatureDependence>
        <text evidence="5">Stable up to about 62 degrees Celsius.</text>
    </temperatureDependence>
</comment>
<comment type="subunit">
    <text evidence="1">Octamer or nonamer in membranes. Monomer in the soluble state.</text>
</comment>
<comment type="subcellular location">
    <subcellularLocation>
        <location evidence="5">Secreted</location>
    </subcellularLocation>
    <subcellularLocation>
        <location evidence="2">Nematocyst</location>
    </subcellularLocation>
    <subcellularLocation>
        <location evidence="1">Target cell membrane</location>
    </subcellularLocation>
    <text evidence="1">Forms an alpha-helical membrane channel in the prey.</text>
</comment>
<comment type="domain">
    <text evidence="3">Composed of a long N-terminal alpha-helix and a core region rich in beta-sheet structures. Before the pore formation, the alpha-helix binds the lipid membrane, partitions into the lipid-water interface and stabilizes the monomeric molecule on the membrane. Finally, it traverses the bilayer, thus forming the transmembrane pore.</text>
</comment>
<comment type="mass spectrometry"/>
<comment type="miscellaneous">
    <text evidence="1">This protein has been found to bind carbohydrates, since it shows a substantial delay in elution profile in size-exclusion chromatography. The carbohydrate pocket ovelaps with the lipid-binding module of actinoporins.</text>
</comment>
<comment type="similarity">
    <text evidence="7">Belongs to the actinoporin family. Sea anemone subfamily.</text>
</comment>
<feature type="chain" id="PRO_0000453823" description="DELTA-actitoxin-Afr1c" evidence="8">
    <location>
        <begin position="1"/>
        <end position="179"/>
    </location>
</feature>
<feature type="region of interest" description="N-terminal alpha-helix that contributes to the pore" evidence="1">
    <location>
        <begin position="1"/>
        <end position="29"/>
    </location>
</feature>
<feature type="region of interest" description="N-terminal region" evidence="3">
    <location>
        <begin position="11"/>
        <end position="30"/>
    </location>
</feature>
<feature type="region of interest" description="Trp-rich region, which is important for the binding to lipid membrane" evidence="3">
    <location>
        <begin position="105"/>
        <end position="120"/>
    </location>
</feature>
<feature type="short sequence motif" description="Cell attachment site, crucial for protein stability" evidence="2 4">
    <location>
        <begin position="144"/>
        <end position="146"/>
    </location>
</feature>
<feature type="binding site" description="in subunit A; in oligomeric forms only" evidence="1">
    <location>
        <position position="31"/>
    </location>
    <ligand>
        <name>an N-(acyl)-sphingosylphosphocholine</name>
        <dbReference type="ChEBI" id="CHEBI:64583"/>
        <label>1</label>
        <note>bridging lipid L1</note>
    </ligand>
</feature>
<feature type="binding site" evidence="1">
    <location>
        <position position="51"/>
    </location>
    <ligand>
        <name>N-acetyl-D-glucosamine 6-sulfate</name>
        <dbReference type="ChEBI" id="CHEBI:84775"/>
    </ligand>
</feature>
<feature type="binding site" description="in monomeric and oligomeric forms" evidence="1">
    <location>
        <position position="53"/>
    </location>
    <ligand>
        <name>an N-(acyl)-sphingosylphosphocholine</name>
        <dbReference type="ChEBI" id="CHEBI:64583"/>
        <label>2</label>
        <note>lipid L2</note>
    </ligand>
</feature>
<feature type="binding site" evidence="1">
    <location>
        <position position="53"/>
    </location>
    <ligand>
        <name>N-acetyl-D-glucosamine 6-sulfate</name>
        <dbReference type="ChEBI" id="CHEBI:84775"/>
    </ligand>
</feature>
<feature type="binding site" description="in monomeric and oligomeric forms" evidence="1">
    <location>
        <position position="54"/>
    </location>
    <ligand>
        <name>an N-(acyl)-sphingosylphosphocholine</name>
        <dbReference type="ChEBI" id="CHEBI:64583"/>
        <label>2</label>
        <note>lipid L2</note>
    </ligand>
</feature>
<feature type="binding site" description="in subunit B; in oligomeric forms only" evidence="1">
    <location>
        <position position="79"/>
    </location>
    <ligand>
        <name>an N-(acyl)-sphingosylphosphocholine</name>
        <dbReference type="ChEBI" id="CHEBI:64583"/>
        <label>1</label>
        <note>bridging lipid L1</note>
    </ligand>
</feature>
<feature type="binding site" description="in monomeric and oligomeric forms" evidence="1">
    <location>
        <position position="85"/>
    </location>
    <ligand>
        <name>an N-(acyl)-sphingosylphosphocholine</name>
        <dbReference type="ChEBI" id="CHEBI:64583"/>
        <label>2</label>
        <note>lipid L2</note>
    </ligand>
</feature>
<feature type="binding site" description="in monomeric and oligomeric forms" evidence="1">
    <location>
        <position position="113"/>
    </location>
    <ligand>
        <name>an N-(acyl)-sphingosylphosphocholine</name>
        <dbReference type="ChEBI" id="CHEBI:64583"/>
        <label>2</label>
        <note>lipid L2</note>
    </ligand>
</feature>
<feature type="binding site" description="in monomeric and oligomeric forms" evidence="1">
    <location>
        <position position="114"/>
    </location>
    <ligand>
        <name>an N-(acyl)-sphingosylphosphocholine</name>
        <dbReference type="ChEBI" id="CHEBI:64583"/>
        <label>5</label>
        <note>lipid L5</note>
    </ligand>
</feature>
<feature type="binding site" description="in monomeric and oligomeric forms" evidence="1">
    <location>
        <position position="116"/>
    </location>
    <ligand>
        <name>an N-(acyl)-sphingosylphosphocholine</name>
        <dbReference type="ChEBI" id="CHEBI:64583"/>
        <label>3</label>
        <note>lipid L3</note>
    </ligand>
</feature>
<feature type="binding site" description="in monomeric and oligomeric forms" evidence="1">
    <location>
        <position position="133"/>
    </location>
    <ligand>
        <name>an N-(acyl)-sphingosylphosphocholine</name>
        <dbReference type="ChEBI" id="CHEBI:64583"/>
        <label>4</label>
        <note>lipid L4</note>
    </ligand>
</feature>
<feature type="binding site" description="in monomeric and oligomeric forms" evidence="1">
    <location>
        <position position="137"/>
    </location>
    <ligand>
        <name>an N-(acyl)-sphingosylphosphocholine</name>
        <dbReference type="ChEBI" id="CHEBI:64583"/>
        <label>3</label>
        <note>lipid L3</note>
    </ligand>
</feature>
<feature type="binding site" description="in monomeric and oligomeric forms" evidence="1">
    <location>
        <position position="138"/>
    </location>
    <ligand>
        <name>an N-(acyl)-sphingosylphosphocholine</name>
        <dbReference type="ChEBI" id="CHEBI:64583"/>
        <label>4</label>
        <note>lipid L4</note>
    </ligand>
</feature>
<feature type="binding site" evidence="1">
    <location>
        <position position="138"/>
    </location>
    <ligand>
        <name>N-acetyl-D-glucosamine 6-sulfate</name>
        <dbReference type="ChEBI" id="CHEBI:84775"/>
    </ligand>
</feature>
<feature type="binding site" description="in monomeric and oligomeric forms" evidence="1">
    <location>
        <position position="144"/>
    </location>
    <ligand>
        <name>an N-(acyl)-sphingosylphosphocholine</name>
        <dbReference type="ChEBI" id="CHEBI:64583"/>
        <label>5</label>
        <note>lipid L5</note>
    </ligand>
</feature>
<feature type="binding site" description="in subunit A; in oligomeric forms only" evidence="1">
    <location>
        <position position="168"/>
    </location>
    <ligand>
        <name>an N-(acyl)-sphingosylphosphocholine</name>
        <dbReference type="ChEBI" id="CHEBI:64583"/>
        <label>1</label>
        <note>bridging lipid L1</note>
    </ligand>
</feature>
<feature type="site" description="Part of the hydrophobic cavity (in subunit A) that receives Val-60 from the adjacent subunit (B); essential in hemolysis, since it is critical for pore formation in cholesterol-rich membrane cells (such as red blood cells)" evidence="1">
    <location>
        <position position="16"/>
    </location>
</feature>
<feature type="site" description="Part of the hydrophobic cavity (in subunit A) that receives Val-60 from the adjacent subunit (B)" evidence="1">
    <location>
        <position position="149"/>
    </location>
</feature>
<feature type="site" description="Part of the hydrophobic cavity (in subunit A) that receives Val-60 from the adjacent subunit (B)" evidence="1">
    <location>
        <position position="163"/>
    </location>
</feature>
<protein>
    <recommendedName>
        <fullName evidence="7">DELTA-actitoxin-Afr1c</fullName>
        <shortName evidence="7">DELTA-AITX-Afr1c</shortName>
    </recommendedName>
    <alternativeName>
        <fullName evidence="1">Alpha-helical pore-forming toxin</fullName>
        <shortName evidence="1">PFT</shortName>
    </alternativeName>
    <alternativeName>
        <fullName evidence="1">Cytolysin</fullName>
    </alternativeName>
    <alternativeName>
        <fullName evidence="6">Fragaceatoxin B</fullName>
        <shortName evidence="6">fraB</shortName>
    </alternativeName>
</protein>
<evidence type="ECO:0000250" key="1">
    <source>
        <dbReference type="UniProtKB" id="B9W5G6"/>
    </source>
</evidence>
<evidence type="ECO:0000250" key="2">
    <source>
        <dbReference type="UniProtKB" id="P07845"/>
    </source>
</evidence>
<evidence type="ECO:0000250" key="3">
    <source>
        <dbReference type="UniProtKB" id="P61914"/>
    </source>
</evidence>
<evidence type="ECO:0000255" key="4"/>
<evidence type="ECO:0000269" key="5">
    <source>
    </source>
</evidence>
<evidence type="ECO:0000303" key="6">
    <source>
    </source>
</evidence>
<evidence type="ECO:0000305" key="7"/>
<evidence type="ECO:0000305" key="8">
    <source>
    </source>
</evidence>
<sequence>SAEVAGAIIDGASLTFDVLQTVLKALGDVSRKIAVGIDNEPGMTWTAMNTYFRSGTSDVILPHTVPHSKALLYDGQKNRGPVTTGVVGVIAYAMSDGNTLAVLFSIPFDYNLYSNWWNVKVYKGHRRADQAMYEELYYDFSPFRGDNGWHTKSIGYGLKGRGFMNSSGKAILQIHVNKV</sequence>
<name>ACTPB_ACTFR</name>
<reference key="1">
    <citation type="journal article" date="2019" name="Toxins">
        <title>The isolation of new pore-forming toxins from the sea anemone Actinia fragacea provides insights into the mechanisms of actinoporin evolution.</title>
        <authorList>
            <person name="Morante K."/>
            <person name="Bellomio A."/>
            <person name="Viguera A.R."/>
            <person name="Gonzalez-Manas J.M."/>
            <person name="Tsumoto K."/>
            <person name="Caaveiro J.M.M."/>
        </authorList>
    </citation>
    <scope>NUCLEOTIDE SEQUENCE [MRNA] OF 13-179</scope>
    <scope>PROTEIN SEQUENCE OF 1-20</scope>
    <scope>FUNCTION</scope>
    <scope>MASS SPECTROMETRY</scope>
    <scope>BIOPHYSICOCHEMICAL PROPERTIES</scope>
</reference>
<keyword id="KW-0204">Cytolysis</keyword>
<keyword id="KW-0903">Direct protein sequencing</keyword>
<keyword id="KW-0406">Ion transport</keyword>
<keyword id="KW-0446">Lipid-binding</keyword>
<keyword id="KW-0472">Membrane</keyword>
<keyword id="KW-0166">Nematocyst</keyword>
<keyword id="KW-0964">Secreted</keyword>
<keyword id="KW-1052">Target cell membrane</keyword>
<keyword id="KW-1053">Target membrane</keyword>
<keyword id="KW-0800">Toxin</keyword>
<keyword id="KW-0812">Transmembrane</keyword>
<keyword id="KW-0813">Transport</keyword>
<dbReference type="EMBL" id="MK936900">
    <property type="protein sequence ID" value="QDM54907.1"/>
    <property type="molecule type" value="mRNA"/>
</dbReference>
<dbReference type="SMR" id="A0A515MEN7"/>
<dbReference type="GO" id="GO:0005576">
    <property type="term" value="C:extracellular region"/>
    <property type="evidence" value="ECO:0007669"/>
    <property type="project" value="UniProtKB-SubCell"/>
</dbReference>
<dbReference type="GO" id="GO:0042151">
    <property type="term" value="C:nematocyst"/>
    <property type="evidence" value="ECO:0007669"/>
    <property type="project" value="UniProtKB-SubCell"/>
</dbReference>
<dbReference type="GO" id="GO:0044218">
    <property type="term" value="C:other organism cell membrane"/>
    <property type="evidence" value="ECO:0007669"/>
    <property type="project" value="UniProtKB-KW"/>
</dbReference>
<dbReference type="GO" id="GO:0046930">
    <property type="term" value="C:pore complex"/>
    <property type="evidence" value="ECO:0007669"/>
    <property type="project" value="InterPro"/>
</dbReference>
<dbReference type="GO" id="GO:0015267">
    <property type="term" value="F:channel activity"/>
    <property type="evidence" value="ECO:0007669"/>
    <property type="project" value="InterPro"/>
</dbReference>
<dbReference type="GO" id="GO:0008289">
    <property type="term" value="F:lipid binding"/>
    <property type="evidence" value="ECO:0007669"/>
    <property type="project" value="UniProtKB-KW"/>
</dbReference>
<dbReference type="GO" id="GO:0090729">
    <property type="term" value="F:toxin activity"/>
    <property type="evidence" value="ECO:0007669"/>
    <property type="project" value="UniProtKB-KW"/>
</dbReference>
<dbReference type="GO" id="GO:0051715">
    <property type="term" value="P:cytolysis in another organism"/>
    <property type="evidence" value="ECO:0007669"/>
    <property type="project" value="InterPro"/>
</dbReference>
<dbReference type="GO" id="GO:0006812">
    <property type="term" value="P:monoatomic cation transport"/>
    <property type="evidence" value="ECO:0007669"/>
    <property type="project" value="InterPro"/>
</dbReference>
<dbReference type="GO" id="GO:0046931">
    <property type="term" value="P:pore complex assembly"/>
    <property type="evidence" value="ECO:0007669"/>
    <property type="project" value="InterPro"/>
</dbReference>
<dbReference type="FunFam" id="2.60.270.20:FF:000001">
    <property type="entry name" value="DELTA-actitoxin-Afr1a"/>
    <property type="match status" value="1"/>
</dbReference>
<dbReference type="Gene3D" id="2.60.270.20">
    <property type="entry name" value="Cytolysin/lectin"/>
    <property type="match status" value="1"/>
</dbReference>
<dbReference type="InterPro" id="IPR050677">
    <property type="entry name" value="Actinoporin_PFT"/>
</dbReference>
<dbReference type="InterPro" id="IPR009104">
    <property type="entry name" value="Anemon_actinoporin-like"/>
</dbReference>
<dbReference type="InterPro" id="IPR015926">
    <property type="entry name" value="Cytolysin/lectin"/>
</dbReference>
<dbReference type="PANTHER" id="PTHR40388">
    <property type="entry name" value="BRYOPORIN"/>
    <property type="match status" value="1"/>
</dbReference>
<dbReference type="PANTHER" id="PTHR40388:SF1">
    <property type="entry name" value="BRYOPORIN"/>
    <property type="match status" value="1"/>
</dbReference>
<dbReference type="Pfam" id="PF06369">
    <property type="entry name" value="Anemone_cytotox"/>
    <property type="match status" value="1"/>
</dbReference>
<dbReference type="SUPFAM" id="SSF63724">
    <property type="entry name" value="Cytolysin/lectin"/>
    <property type="match status" value="1"/>
</dbReference>